<evidence type="ECO:0000250" key="1"/>
<evidence type="ECO:0000255" key="2">
    <source>
        <dbReference type="HAMAP-Rule" id="MF_00141"/>
    </source>
</evidence>
<protein>
    <recommendedName>
        <fullName evidence="2">Elongation factor P</fullName>
        <shortName evidence="2">EF-P</shortName>
    </recommendedName>
</protein>
<gene>
    <name evidence="2" type="primary">efp</name>
    <name type="ordered locus">c5232</name>
</gene>
<reference key="1">
    <citation type="journal article" date="2002" name="Proc. Natl. Acad. Sci. U.S.A.">
        <title>Extensive mosaic structure revealed by the complete genome sequence of uropathogenic Escherichia coli.</title>
        <authorList>
            <person name="Welch R.A."/>
            <person name="Burland V."/>
            <person name="Plunkett G. III"/>
            <person name="Redford P."/>
            <person name="Roesch P."/>
            <person name="Rasko D."/>
            <person name="Buckles E.L."/>
            <person name="Liou S.-R."/>
            <person name="Boutin A."/>
            <person name="Hackett J."/>
            <person name="Stroud D."/>
            <person name="Mayhew G.F."/>
            <person name="Rose D.J."/>
            <person name="Zhou S."/>
            <person name="Schwartz D.C."/>
            <person name="Perna N.T."/>
            <person name="Mobley H.L.T."/>
            <person name="Donnenberg M.S."/>
            <person name="Blattner F.R."/>
        </authorList>
    </citation>
    <scope>NUCLEOTIDE SEQUENCE [LARGE SCALE GENOMIC DNA]</scope>
    <source>
        <strain>CFT073 / ATCC 700928 / UPEC</strain>
    </source>
</reference>
<proteinExistence type="inferred from homology"/>
<dbReference type="EMBL" id="AE014075">
    <property type="protein sequence ID" value="AAN83654.1"/>
    <property type="molecule type" value="Genomic_DNA"/>
</dbReference>
<dbReference type="RefSeq" id="WP_000257278.1">
    <property type="nucleotide sequence ID" value="NZ_CP051263.1"/>
</dbReference>
<dbReference type="SMR" id="P0A6N5"/>
<dbReference type="STRING" id="199310.c5232"/>
<dbReference type="GeneID" id="93777677"/>
<dbReference type="KEGG" id="ecc:c5232"/>
<dbReference type="eggNOG" id="COG0231">
    <property type="taxonomic scope" value="Bacteria"/>
</dbReference>
<dbReference type="HOGENOM" id="CLU_074944_0_0_6"/>
<dbReference type="BioCyc" id="ECOL199310:C5232-MONOMER"/>
<dbReference type="UniPathway" id="UPA00345"/>
<dbReference type="Proteomes" id="UP000001410">
    <property type="component" value="Chromosome"/>
</dbReference>
<dbReference type="GO" id="GO:0005829">
    <property type="term" value="C:cytosol"/>
    <property type="evidence" value="ECO:0007669"/>
    <property type="project" value="UniProtKB-ARBA"/>
</dbReference>
<dbReference type="GO" id="GO:0003746">
    <property type="term" value="F:translation elongation factor activity"/>
    <property type="evidence" value="ECO:0007669"/>
    <property type="project" value="UniProtKB-UniRule"/>
</dbReference>
<dbReference type="GO" id="GO:0043043">
    <property type="term" value="P:peptide biosynthetic process"/>
    <property type="evidence" value="ECO:0007669"/>
    <property type="project" value="InterPro"/>
</dbReference>
<dbReference type="CDD" id="cd04470">
    <property type="entry name" value="S1_EF-P_repeat_1"/>
    <property type="match status" value="1"/>
</dbReference>
<dbReference type="CDD" id="cd05794">
    <property type="entry name" value="S1_EF-P_repeat_2"/>
    <property type="match status" value="1"/>
</dbReference>
<dbReference type="FunFam" id="2.30.30.30:FF:000003">
    <property type="entry name" value="Elongation factor P"/>
    <property type="match status" value="1"/>
</dbReference>
<dbReference type="FunFam" id="2.40.50.140:FF:000004">
    <property type="entry name" value="Elongation factor P"/>
    <property type="match status" value="1"/>
</dbReference>
<dbReference type="FunFam" id="2.40.50.140:FF:000009">
    <property type="entry name" value="Elongation factor P"/>
    <property type="match status" value="1"/>
</dbReference>
<dbReference type="Gene3D" id="2.30.30.30">
    <property type="match status" value="1"/>
</dbReference>
<dbReference type="Gene3D" id="2.40.50.140">
    <property type="entry name" value="Nucleic acid-binding proteins"/>
    <property type="match status" value="2"/>
</dbReference>
<dbReference type="HAMAP" id="MF_00141">
    <property type="entry name" value="EF_P"/>
    <property type="match status" value="1"/>
</dbReference>
<dbReference type="InterPro" id="IPR015365">
    <property type="entry name" value="Elong-fact-P_C"/>
</dbReference>
<dbReference type="InterPro" id="IPR012340">
    <property type="entry name" value="NA-bd_OB-fold"/>
</dbReference>
<dbReference type="InterPro" id="IPR014722">
    <property type="entry name" value="Rib_uL2_dom2"/>
</dbReference>
<dbReference type="InterPro" id="IPR020599">
    <property type="entry name" value="Transl_elong_fac_P/YeiP"/>
</dbReference>
<dbReference type="InterPro" id="IPR013185">
    <property type="entry name" value="Transl_elong_KOW-like"/>
</dbReference>
<dbReference type="InterPro" id="IPR001059">
    <property type="entry name" value="Transl_elong_P/YeiP_cen"/>
</dbReference>
<dbReference type="InterPro" id="IPR013852">
    <property type="entry name" value="Transl_elong_P/YeiP_CS"/>
</dbReference>
<dbReference type="InterPro" id="IPR011768">
    <property type="entry name" value="Transl_elongation_fac_P"/>
</dbReference>
<dbReference type="InterPro" id="IPR008991">
    <property type="entry name" value="Translation_prot_SH3-like_sf"/>
</dbReference>
<dbReference type="NCBIfam" id="TIGR00038">
    <property type="entry name" value="efp"/>
    <property type="match status" value="1"/>
</dbReference>
<dbReference type="NCBIfam" id="NF001810">
    <property type="entry name" value="PRK00529.1"/>
    <property type="match status" value="1"/>
</dbReference>
<dbReference type="PANTHER" id="PTHR30053">
    <property type="entry name" value="ELONGATION FACTOR P"/>
    <property type="match status" value="1"/>
</dbReference>
<dbReference type="PANTHER" id="PTHR30053:SF12">
    <property type="entry name" value="ELONGATION FACTOR P (EF-P) FAMILY PROTEIN"/>
    <property type="match status" value="1"/>
</dbReference>
<dbReference type="Pfam" id="PF01132">
    <property type="entry name" value="EFP"/>
    <property type="match status" value="1"/>
</dbReference>
<dbReference type="Pfam" id="PF08207">
    <property type="entry name" value="EFP_N"/>
    <property type="match status" value="1"/>
</dbReference>
<dbReference type="Pfam" id="PF09285">
    <property type="entry name" value="Elong-fact-P_C"/>
    <property type="match status" value="1"/>
</dbReference>
<dbReference type="PIRSF" id="PIRSF005901">
    <property type="entry name" value="EF-P"/>
    <property type="match status" value="1"/>
</dbReference>
<dbReference type="SMART" id="SM01185">
    <property type="entry name" value="EFP"/>
    <property type="match status" value="1"/>
</dbReference>
<dbReference type="SMART" id="SM00841">
    <property type="entry name" value="Elong-fact-P_C"/>
    <property type="match status" value="1"/>
</dbReference>
<dbReference type="SUPFAM" id="SSF50249">
    <property type="entry name" value="Nucleic acid-binding proteins"/>
    <property type="match status" value="2"/>
</dbReference>
<dbReference type="SUPFAM" id="SSF50104">
    <property type="entry name" value="Translation proteins SH3-like domain"/>
    <property type="match status" value="1"/>
</dbReference>
<dbReference type="PROSITE" id="PS01275">
    <property type="entry name" value="EFP"/>
    <property type="match status" value="1"/>
</dbReference>
<feature type="initiator methionine" description="Removed" evidence="1">
    <location>
        <position position="1"/>
    </location>
</feature>
<feature type="chain" id="PRO_0000094246" description="Elongation factor P">
    <location>
        <begin position="2"/>
        <end position="188"/>
    </location>
</feature>
<feature type="modified residue" description="N6-(3,6-diaminohexanoyl)-5-hydroxylysine" evidence="2">
    <location>
        <position position="34"/>
    </location>
</feature>
<name>EFP_ECOL6</name>
<keyword id="KW-0963">Cytoplasm</keyword>
<keyword id="KW-0251">Elongation factor</keyword>
<keyword id="KW-0379">Hydroxylation</keyword>
<keyword id="KW-0648">Protein biosynthesis</keyword>
<keyword id="KW-1185">Reference proteome</keyword>
<sequence length="188" mass="20591">MATYYSNDFRAGLKIMLDGEPYAVEASEFVKPGKGQAFARVKLRRLLTGTRVEKTFKSTDSAEGADVVDMNLTYLYNDGEFWHFMNNETFEQLSADAKAIGDNAKWLLDQAECIVTLWNGQPISVTPPNFVELEIVDTDPGLKGDTAGTGGKPATLSTGAVVKVPLFVQIGEVIKVDTRSGEYVSRVK</sequence>
<comment type="function">
    <text evidence="2">Involved in peptide bond synthesis. Alleviates ribosome stalling that occurs when 3 or more consecutive Pro residues or the sequence PPG is present in a protein, possibly by augmenting the peptidyl transferase activity of the ribosome. Modification of Lys-34 is required for alleviation.</text>
</comment>
<comment type="pathway">
    <text evidence="2">Protein biosynthesis; polypeptide chain elongation.</text>
</comment>
<comment type="subcellular location">
    <subcellularLocation>
        <location evidence="2">Cytoplasm</location>
    </subcellularLocation>
</comment>
<comment type="PTM">
    <text evidence="2">Is beta-lysylated on the epsilon-amino group of Lys-34 by the combined action of EpmA and EpmB, and then hydroxylated on the C5 position of the same residue by EpmC. Lysylation is critical for the stimulatory effect of EF-P on peptide-bond formation. The lysylation moiety would extend toward the peptidyltransferase center and stabilize the terminal 3-CCA end of the tRNA. The hydroxylation of the C5 position on Lys-34 would allow additional potential stabilizing hydrogen-bond interactions with the P-tRNA.</text>
</comment>
<comment type="similarity">
    <text evidence="2">Belongs to the elongation factor P family.</text>
</comment>
<organism>
    <name type="scientific">Escherichia coli O6:H1 (strain CFT073 / ATCC 700928 / UPEC)</name>
    <dbReference type="NCBI Taxonomy" id="199310"/>
    <lineage>
        <taxon>Bacteria</taxon>
        <taxon>Pseudomonadati</taxon>
        <taxon>Pseudomonadota</taxon>
        <taxon>Gammaproteobacteria</taxon>
        <taxon>Enterobacterales</taxon>
        <taxon>Enterobacteriaceae</taxon>
        <taxon>Escherichia</taxon>
    </lineage>
</organism>
<accession>P0A6N5</accession>
<accession>P33398</accession>